<dbReference type="EMBL" id="AC004218">
    <property type="protein sequence ID" value="AAC27838.2"/>
    <property type="molecule type" value="Genomic_DNA"/>
</dbReference>
<dbReference type="EMBL" id="CP002685">
    <property type="protein sequence ID" value="AEC09682.1"/>
    <property type="molecule type" value="Genomic_DNA"/>
</dbReference>
<dbReference type="EMBL" id="CP002685">
    <property type="protein sequence ID" value="AEC09683.1"/>
    <property type="molecule type" value="Genomic_DNA"/>
</dbReference>
<dbReference type="EMBL" id="CP002685">
    <property type="protein sequence ID" value="AEC09684.1"/>
    <property type="molecule type" value="Genomic_DNA"/>
</dbReference>
<dbReference type="EMBL" id="AY039968">
    <property type="protein sequence ID" value="AAK64145.1"/>
    <property type="molecule type" value="mRNA"/>
</dbReference>
<dbReference type="EMBL" id="AY133798">
    <property type="protein sequence ID" value="AAM91732.1"/>
    <property type="molecule type" value="mRNA"/>
</dbReference>
<dbReference type="EMBL" id="AY085632">
    <property type="protein sequence ID" value="AAM62853.1"/>
    <property type="molecule type" value="mRNA"/>
</dbReference>
<dbReference type="PIR" id="T00557">
    <property type="entry name" value="T00557"/>
</dbReference>
<dbReference type="RefSeq" id="NP_001031514.2">
    <molecule id="O80634-2"/>
    <property type="nucleotide sequence ID" value="NM_001036437.3"/>
</dbReference>
<dbReference type="RefSeq" id="NP_001078022.1">
    <molecule id="O80634-3"/>
    <property type="nucleotide sequence ID" value="NM_001084553.1"/>
</dbReference>
<dbReference type="RefSeq" id="NP_565906.1">
    <molecule id="O80634-1"/>
    <property type="nucleotide sequence ID" value="NM_129505.4"/>
</dbReference>
<dbReference type="PDB" id="7WFF">
    <property type="method" value="EM"/>
    <property type="resolution" value="3.59 A"/>
    <property type="chains" value="f=1-238"/>
</dbReference>
<dbReference type="PDB" id="7WG5">
    <property type="method" value="EM"/>
    <property type="resolution" value="3.89 A"/>
    <property type="chains" value="f=1-238"/>
</dbReference>
<dbReference type="PDBsum" id="7WFF"/>
<dbReference type="PDBsum" id="7WG5"/>
<dbReference type="EMDB" id="EMD-32464"/>
<dbReference type="EMDB" id="EMD-32477"/>
<dbReference type="SMR" id="O80634"/>
<dbReference type="BioGRID" id="3870">
    <property type="interactions" value="3"/>
</dbReference>
<dbReference type="FunCoup" id="O80634">
    <property type="interactions" value="1011"/>
</dbReference>
<dbReference type="STRING" id="3702.O80634"/>
<dbReference type="TCDB" id="3.D.1.8.1">
    <property type="family name" value="the h+ or na+-translocating nadh dehydrogenase (ndh) family"/>
</dbReference>
<dbReference type="PaxDb" id="3702-AT2G39470.1"/>
<dbReference type="ProteomicsDB" id="226191">
    <molecule id="O80634-1"/>
</dbReference>
<dbReference type="EnsemblPlants" id="AT2G39470.1">
    <molecule id="O80634-1"/>
    <property type="protein sequence ID" value="AT2G39470.1"/>
    <property type="gene ID" value="AT2G39470"/>
</dbReference>
<dbReference type="EnsemblPlants" id="AT2G39470.2">
    <molecule id="O80634-2"/>
    <property type="protein sequence ID" value="AT2G39470.2"/>
    <property type="gene ID" value="AT2G39470"/>
</dbReference>
<dbReference type="EnsemblPlants" id="AT2G39470.3">
    <molecule id="O80634-3"/>
    <property type="protein sequence ID" value="AT2G39470.3"/>
    <property type="gene ID" value="AT2G39470"/>
</dbReference>
<dbReference type="GeneID" id="818532"/>
<dbReference type="Gramene" id="AT2G39470.1">
    <molecule id="O80634-1"/>
    <property type="protein sequence ID" value="AT2G39470.1"/>
    <property type="gene ID" value="AT2G39470"/>
</dbReference>
<dbReference type="Gramene" id="AT2G39470.2">
    <molecule id="O80634-2"/>
    <property type="protein sequence ID" value="AT2G39470.2"/>
    <property type="gene ID" value="AT2G39470"/>
</dbReference>
<dbReference type="Gramene" id="AT2G39470.3">
    <molecule id="O80634-3"/>
    <property type="protein sequence ID" value="AT2G39470.3"/>
    <property type="gene ID" value="AT2G39470"/>
</dbReference>
<dbReference type="KEGG" id="ath:AT2G39470"/>
<dbReference type="Araport" id="AT2G39470"/>
<dbReference type="TAIR" id="AT2G39470">
    <property type="gene designation" value="PNSL1"/>
</dbReference>
<dbReference type="eggNOG" id="ENOG502QQHK">
    <property type="taxonomic scope" value="Eukaryota"/>
</dbReference>
<dbReference type="HOGENOM" id="CLU_039569_1_0_1"/>
<dbReference type="InParanoid" id="O80634"/>
<dbReference type="OMA" id="IHELGPM"/>
<dbReference type="PhylomeDB" id="O80634"/>
<dbReference type="PRO" id="PR:O80634"/>
<dbReference type="Proteomes" id="UP000006548">
    <property type="component" value="Chromosome 2"/>
</dbReference>
<dbReference type="ExpressionAtlas" id="O80634">
    <property type="expression patterns" value="baseline and differential"/>
</dbReference>
<dbReference type="GO" id="GO:0009507">
    <property type="term" value="C:chloroplast"/>
    <property type="evidence" value="ECO:0007005"/>
    <property type="project" value="TAIR"/>
</dbReference>
<dbReference type="GO" id="GO:0009535">
    <property type="term" value="C:chloroplast thylakoid membrane"/>
    <property type="evidence" value="ECO:0007005"/>
    <property type="project" value="TAIR"/>
</dbReference>
<dbReference type="GO" id="GO:0019898">
    <property type="term" value="C:extrinsic component of membrane"/>
    <property type="evidence" value="ECO:0007669"/>
    <property type="project" value="InterPro"/>
</dbReference>
<dbReference type="GO" id="GO:0009654">
    <property type="term" value="C:photosystem II oxygen evolving complex"/>
    <property type="evidence" value="ECO:0007669"/>
    <property type="project" value="InterPro"/>
</dbReference>
<dbReference type="GO" id="GO:0009579">
    <property type="term" value="C:thylakoid"/>
    <property type="evidence" value="ECO:0007005"/>
    <property type="project" value="TAIR"/>
</dbReference>
<dbReference type="GO" id="GO:0005509">
    <property type="term" value="F:calcium ion binding"/>
    <property type="evidence" value="ECO:0007669"/>
    <property type="project" value="InterPro"/>
</dbReference>
<dbReference type="GO" id="GO:0015979">
    <property type="term" value="P:photosynthesis"/>
    <property type="evidence" value="ECO:0007669"/>
    <property type="project" value="InterPro"/>
</dbReference>
<dbReference type="Gene3D" id="3.40.1000.10">
    <property type="entry name" value="Mog1/PsbP, alpha/beta/alpha sandwich"/>
    <property type="match status" value="1"/>
</dbReference>
<dbReference type="InterPro" id="IPR016123">
    <property type="entry name" value="Mog1/PsbP_a/b/a-sand"/>
</dbReference>
<dbReference type="InterPro" id="IPR002683">
    <property type="entry name" value="PsbP_C"/>
</dbReference>
<dbReference type="NCBIfam" id="NF040946">
    <property type="entry name" value="PSII_PsbP"/>
    <property type="match status" value="1"/>
</dbReference>
<dbReference type="PANTHER" id="PTHR31407">
    <property type="match status" value="1"/>
</dbReference>
<dbReference type="PANTHER" id="PTHR31407:SF10">
    <property type="entry name" value="PHOTOSYNTHETIC NDH SUBUNIT OF LUMENAL LOCATION 1, CHLOROPLASTIC"/>
    <property type="match status" value="1"/>
</dbReference>
<dbReference type="Pfam" id="PF01789">
    <property type="entry name" value="PsbP"/>
    <property type="match status" value="1"/>
</dbReference>
<dbReference type="SUPFAM" id="SSF55724">
    <property type="entry name" value="Mog1p/PsbP-like"/>
    <property type="match status" value="1"/>
</dbReference>
<organism>
    <name type="scientific">Arabidopsis thaliana</name>
    <name type="common">Mouse-ear cress</name>
    <dbReference type="NCBI Taxonomy" id="3702"/>
    <lineage>
        <taxon>Eukaryota</taxon>
        <taxon>Viridiplantae</taxon>
        <taxon>Streptophyta</taxon>
        <taxon>Embryophyta</taxon>
        <taxon>Tracheophyta</taxon>
        <taxon>Spermatophyta</taxon>
        <taxon>Magnoliopsida</taxon>
        <taxon>eudicotyledons</taxon>
        <taxon>Gunneridae</taxon>
        <taxon>Pentapetalae</taxon>
        <taxon>rosids</taxon>
        <taxon>malvids</taxon>
        <taxon>Brassicales</taxon>
        <taxon>Brassicaceae</taxon>
        <taxon>Camelineae</taxon>
        <taxon>Arabidopsis</taxon>
    </lineage>
</organism>
<protein>
    <recommendedName>
        <fullName evidence="5">Photosynthetic NDH subunit of lumenal location 1, chloroplastic</fullName>
    </recommendedName>
    <alternativeName>
        <fullName>PsbP-like protein 2</fullName>
    </alternativeName>
</protein>
<gene>
    <name evidence="5" type="primary">PNSL1</name>
    <name type="synonym">PPL2</name>
    <name evidence="7" type="ordered locus">At2g39470</name>
    <name evidence="8" type="ORF">F12L6.13</name>
</gene>
<proteinExistence type="evidence at protein level"/>
<evidence type="ECO:0000255" key="1"/>
<evidence type="ECO:0000269" key="2">
    <source>
    </source>
</evidence>
<evidence type="ECO:0000269" key="3">
    <source>
    </source>
</evidence>
<evidence type="ECO:0000269" key="4">
    <source>
    </source>
</evidence>
<evidence type="ECO:0000303" key="5">
    <source>
    </source>
</evidence>
<evidence type="ECO:0000305" key="6"/>
<evidence type="ECO:0000312" key="7">
    <source>
        <dbReference type="Araport" id="AT2G39470"/>
    </source>
</evidence>
<evidence type="ECO:0000312" key="8">
    <source>
        <dbReference type="EMBL" id="AAC27838.2"/>
    </source>
</evidence>
<accession>O80634</accession>
<accession>A8MQY7</accession>
<accession>Q2V417</accession>
<accession>Q94BP9</accession>
<reference key="1">
    <citation type="journal article" date="1999" name="Nature">
        <title>Sequence and analysis of chromosome 2 of the plant Arabidopsis thaliana.</title>
        <authorList>
            <person name="Lin X."/>
            <person name="Kaul S."/>
            <person name="Rounsley S.D."/>
            <person name="Shea T.P."/>
            <person name="Benito M.-I."/>
            <person name="Town C.D."/>
            <person name="Fujii C.Y."/>
            <person name="Mason T.M."/>
            <person name="Bowman C.L."/>
            <person name="Barnstead M.E."/>
            <person name="Feldblyum T.V."/>
            <person name="Buell C.R."/>
            <person name="Ketchum K.A."/>
            <person name="Lee J.J."/>
            <person name="Ronning C.M."/>
            <person name="Koo H.L."/>
            <person name="Moffat K.S."/>
            <person name="Cronin L.A."/>
            <person name="Shen M."/>
            <person name="Pai G."/>
            <person name="Van Aken S."/>
            <person name="Umayam L."/>
            <person name="Tallon L.J."/>
            <person name="Gill J.E."/>
            <person name="Adams M.D."/>
            <person name="Carrera A.J."/>
            <person name="Creasy T.H."/>
            <person name="Goodman H.M."/>
            <person name="Somerville C.R."/>
            <person name="Copenhaver G.P."/>
            <person name="Preuss D."/>
            <person name="Nierman W.C."/>
            <person name="White O."/>
            <person name="Eisen J.A."/>
            <person name="Salzberg S.L."/>
            <person name="Fraser C.M."/>
            <person name="Venter J.C."/>
        </authorList>
    </citation>
    <scope>NUCLEOTIDE SEQUENCE [LARGE SCALE GENOMIC DNA]</scope>
    <source>
        <strain>cv. Columbia</strain>
    </source>
</reference>
<reference key="2">
    <citation type="journal article" date="2017" name="Plant J.">
        <title>Araport11: a complete reannotation of the Arabidopsis thaliana reference genome.</title>
        <authorList>
            <person name="Cheng C.Y."/>
            <person name="Krishnakumar V."/>
            <person name="Chan A.P."/>
            <person name="Thibaud-Nissen F."/>
            <person name="Schobel S."/>
            <person name="Town C.D."/>
        </authorList>
    </citation>
    <scope>GENOME REANNOTATION</scope>
    <source>
        <strain>cv. Columbia</strain>
    </source>
</reference>
<reference key="3">
    <citation type="journal article" date="2003" name="Science">
        <title>Empirical analysis of transcriptional activity in the Arabidopsis genome.</title>
        <authorList>
            <person name="Yamada K."/>
            <person name="Lim J."/>
            <person name="Dale J.M."/>
            <person name="Chen H."/>
            <person name="Shinn P."/>
            <person name="Palm C.J."/>
            <person name="Southwick A.M."/>
            <person name="Wu H.C."/>
            <person name="Kim C.J."/>
            <person name="Nguyen M."/>
            <person name="Pham P.K."/>
            <person name="Cheuk R.F."/>
            <person name="Karlin-Newmann G."/>
            <person name="Liu S.X."/>
            <person name="Lam B."/>
            <person name="Sakano H."/>
            <person name="Wu T."/>
            <person name="Yu G."/>
            <person name="Miranda M."/>
            <person name="Quach H.L."/>
            <person name="Tripp M."/>
            <person name="Chang C.H."/>
            <person name="Lee J.M."/>
            <person name="Toriumi M.J."/>
            <person name="Chan M.M."/>
            <person name="Tang C.C."/>
            <person name="Onodera C.S."/>
            <person name="Deng J.M."/>
            <person name="Akiyama K."/>
            <person name="Ansari Y."/>
            <person name="Arakawa T."/>
            <person name="Banh J."/>
            <person name="Banno F."/>
            <person name="Bowser L."/>
            <person name="Brooks S.Y."/>
            <person name="Carninci P."/>
            <person name="Chao Q."/>
            <person name="Choy N."/>
            <person name="Enju A."/>
            <person name="Goldsmith A.D."/>
            <person name="Gurjal M."/>
            <person name="Hansen N.F."/>
            <person name="Hayashizaki Y."/>
            <person name="Johnson-Hopson C."/>
            <person name="Hsuan V.W."/>
            <person name="Iida K."/>
            <person name="Karnes M."/>
            <person name="Khan S."/>
            <person name="Koesema E."/>
            <person name="Ishida J."/>
            <person name="Jiang P.X."/>
            <person name="Jones T."/>
            <person name="Kawai J."/>
            <person name="Kamiya A."/>
            <person name="Meyers C."/>
            <person name="Nakajima M."/>
            <person name="Narusaka M."/>
            <person name="Seki M."/>
            <person name="Sakurai T."/>
            <person name="Satou M."/>
            <person name="Tamse R."/>
            <person name="Vaysberg M."/>
            <person name="Wallender E.K."/>
            <person name="Wong C."/>
            <person name="Yamamura Y."/>
            <person name="Yuan S."/>
            <person name="Shinozaki K."/>
            <person name="Davis R.W."/>
            <person name="Theologis A."/>
            <person name="Ecker J.R."/>
        </authorList>
    </citation>
    <scope>NUCLEOTIDE SEQUENCE [LARGE SCALE MRNA] (ISOFORM 1)</scope>
    <source>
        <strain>cv. Columbia</strain>
    </source>
</reference>
<reference key="4">
    <citation type="submission" date="2002-03" db="EMBL/GenBank/DDBJ databases">
        <title>Full-length cDNA from Arabidopsis thaliana.</title>
        <authorList>
            <person name="Brover V.V."/>
            <person name="Troukhan M.E."/>
            <person name="Alexandrov N.A."/>
            <person name="Lu Y.-P."/>
            <person name="Flavell R.B."/>
            <person name="Feldmann K.A."/>
        </authorList>
    </citation>
    <scope>NUCLEOTIDE SEQUENCE [LARGE SCALE MRNA] (ISOFORM 1)</scope>
</reference>
<reference key="5">
    <citation type="journal article" date="2007" name="Plant Physiol.">
        <title>Distinct functions for the two PsbP-like proteins PPL1 and PPL2 in the chloroplast thylakoid lumen of Arabidopsis.</title>
        <authorList>
            <person name="Ishihara S."/>
            <person name="Takabayashi A."/>
            <person name="Ido K."/>
            <person name="Endo T."/>
            <person name="Ifuku K."/>
            <person name="Sato F."/>
        </authorList>
    </citation>
    <scope>FUNCTION</scope>
    <scope>GENE FAMILY</scope>
    <scope>NOMENCLATURE</scope>
    <scope>DISRUPTION PHENOTYPE</scope>
</reference>
<reference key="6">
    <citation type="journal article" date="2008" name="PLoS ONE">
        <title>Sorting signals, N-terminal modifications and abundance of the chloroplast proteome.</title>
        <authorList>
            <person name="Zybailov B."/>
            <person name="Rutschow H."/>
            <person name="Friso G."/>
            <person name="Rudella A."/>
            <person name="Emanuelsson O."/>
            <person name="Sun Q."/>
            <person name="van Wijk K.J."/>
        </authorList>
    </citation>
    <scope>IDENTIFICATION BY MASS SPECTROMETRY</scope>
    <scope>SUBCELLULAR LOCATION [LARGE SCALE ANALYSIS]</scope>
</reference>
<reference key="7">
    <citation type="journal article" date="2009" name="Mol. Plant">
        <title>Towards characterization of the chloroplast NAD(P)H dehydrogenase complex.</title>
        <authorList>
            <person name="Suorsa M."/>
            <person name="Sirpioe S."/>
            <person name="Aro E.M."/>
        </authorList>
    </citation>
    <scope>REVIEW</scope>
</reference>
<reference key="8">
    <citation type="journal article" date="2011" name="Biochim. Biophys. Acta">
        <title>Structure and biogenesis of the chloroplast NAD(P)H dehydrogenase complex.</title>
        <authorList>
            <person name="Peng L."/>
            <person name="Yamamoto H."/>
            <person name="Shikanai T."/>
        </authorList>
    </citation>
    <scope>REVIEW</scope>
</reference>
<reference key="9">
    <citation type="journal article" date="2011" name="Plant Cell Physiol.">
        <title>Structure of the chloroplast NADH dehydrogenase-like complex: nomenclature for nuclear-encoded subunits.</title>
        <authorList>
            <person name="Ifuku K."/>
            <person name="Endo T."/>
            <person name="Shikanai T."/>
            <person name="Aro E.M."/>
        </authorList>
    </citation>
    <scope>NOMENCLATURE</scope>
    <scope>COMPONENT OF THE NDH COMPLEX</scope>
</reference>
<keyword id="KW-0002">3D-structure</keyword>
<keyword id="KW-0025">Alternative splicing</keyword>
<keyword id="KW-0150">Chloroplast</keyword>
<keyword id="KW-0472">Membrane</keyword>
<keyword id="KW-0934">Plastid</keyword>
<keyword id="KW-1185">Reference proteome</keyword>
<keyword id="KW-0793">Thylakoid</keyword>
<keyword id="KW-0809">Transit peptide</keyword>
<keyword id="KW-0813">Transport</keyword>
<sequence>MAVSSLSIRCGGFSPTISHKTEILCPNPSLKACCLLSSGGKADSSESTYQKGSGNNWKRRQALVGVGTLVATSIPATLLLAEEIPKSYSPFVDREDGYSYYYPSDWREFDFRAHDSAFKDRYLQLQNVRVRFIPTEKNDIHEVGPMEEVVYDLVKHKFAAPNQVATIYDMKERVEDGKNYYTFEYGLRTPIYATTSFATVAVGNNRYYTLIVGANERRWRKVKKQLQVVADSLKILQI</sequence>
<comment type="function">
    <text evidence="2 6">NDH shuttles electrons from NAD(P)H:plastoquinone, via FMN and iron-sulfur (Fe-S) centers, to quinones in the photosynthetic chain and possibly in a chloroplast respiratory chain. The immediate electron acceptor for the enzyme in this species is believed to be plastoquinone. Couples the redox reaction to proton translocation, and thus conserves the redox energy in a proton gradient (Probable). Required for accumulation of the chloroplast NAD(P)H dehydrogenase (NDH) complex (PubMed:17827269).</text>
</comment>
<comment type="subunit">
    <text evidence="4">Part of the chloroplast NDH complex, composed of a mixture of chloroplast and nucleus encoded subunits. Component of the NDH lumenal subcomplex, at least composed of PnsL1, PnsL2, PnsL3, PnsL4 and PnsL5.</text>
</comment>
<comment type="subcellular location">
    <subcellularLocation>
        <location evidence="3">Plastid</location>
        <location evidence="3">Chloroplast thylakoid membrane</location>
        <topology evidence="6">Peripheral membrane protein</topology>
        <orientation evidence="6">Lumenal side</orientation>
    </subcellularLocation>
</comment>
<comment type="alternative products">
    <event type="alternative splicing"/>
    <isoform>
        <id>O80634-1</id>
        <name>1</name>
        <sequence type="displayed"/>
    </isoform>
    <isoform>
        <id>O80634-2</id>
        <name>2</name>
        <sequence type="described" ref="VSP_034346"/>
    </isoform>
    <isoform>
        <id>O80634-3</id>
        <name>3</name>
        <sequence type="described" ref="VSP_034346 VSP_034347 VSP_034348"/>
    </isoform>
</comment>
<comment type="disruption phenotype">
    <text evidence="2">No visible phenotype.</text>
</comment>
<comment type="similarity">
    <text evidence="6">Belongs to the PsbP family.</text>
</comment>
<feature type="transit peptide" description="Chloroplast" evidence="1">
    <location>
        <begin position="1"/>
        <end status="unknown"/>
    </location>
</feature>
<feature type="transit peptide" description="Thylakoid" evidence="1">
    <location>
        <begin status="unknown"/>
        <end position="80"/>
    </location>
</feature>
<feature type="chain" id="PRO_0000341584" description="Photosynthetic NDH subunit of lumenal location 1, chloroplastic">
    <location>
        <begin position="81"/>
        <end position="238"/>
    </location>
</feature>
<feature type="splice variant" id="VSP_034346" description="In isoform 2 and isoform 3." evidence="6">
    <original>GKADSSEST</original>
    <variation>A</variation>
    <location>
        <begin position="40"/>
        <end position="48"/>
    </location>
</feature>
<feature type="splice variant" id="VSP_034347" description="In isoform 3." evidence="6">
    <original>RVEDGKNYYT</original>
    <variation>GGRWKELLHV</variation>
    <location>
        <begin position="173"/>
        <end position="182"/>
    </location>
</feature>
<feature type="splice variant" id="VSP_034348" description="In isoform 3." evidence="6">
    <location>
        <begin position="183"/>
        <end position="238"/>
    </location>
</feature>
<name>PNSL1_ARATH</name>